<sequence length="1778" mass="212663">MVFQSFILGNLVSLCMKIINSVVVVGLYYGFLTTFSIGPSYLFLLRARVMDEGEEGTEKKVSATTGFIAGQLMMFISIYYAPLHLALGRPHTITVLALPYLLFHFFWNNNKHFFDYGSTTRNEMRNLRIQCVFLNNLIFQLFNHFILPSSMLARLVNIYMFRCNNKMLFVTSSFVGWLIGHILFMKWVGLVLVWIQQNNSIRSNVLIRSNKYKFLVSELRNSMARIFSILLFITCVYYLGRIPSPIFTKKLKGTSETGGTKQDPEVSTEEAPFRSLFSEEREDLDKIDEMEEIRVNGKEKINKDDEFHVRTYYNYKTVSENRDGNKENSNLKFLKIKEDPFFFLWFEKPFVTLVFDYKRWNRPNRYIKNDKIENTVRNEMSQYFFYTCQSDGKERISFTYPPNLSTFFEMIQKKISSFTRAKAPSDQVYAYWSLLNEKKKENLKNEFLNRIEALDLDKERSFENILEKTTRFCHNETKKEYLPKLYDPFLHGISRGKIKKLLPFKKITDINIGIGGSWINKIHGILLRINSHKFEQTIEKFTRKSLSIEKKLSFFSEPQEEKINSEEEIKIFKFLFDVVITDNNNKTLIKNFIDFHEINKNVPRWSYKLTSELEELEGENEENVPTEPGIRSRKAKSVVVFTDKEPHNGIFTNLKDNQNSDQKDEMALIRYSQHSDFRRDLIKGSMRSQRRKTVIWDFFQAKVHSPLFFDRIDKLFFFSFDFWGLKKKIIRNFMWKKKKKEFLKKEDEQSKRKETRRIEIAETWDSFPFSQIIRGSLLVTQSILRKYIILPLLIIIKNSTRALLFQVPEWSEDLKDWKREMHVKCTYNGVQLSETEFPRNWLTDGIQIKILFPFYLKPWHKLKVQSSQKARLKKIKDKGEKTDFGFLTVWGMETELPFGSAKKKRSFFEPIFKELKKRIKKFKTKPFRVLSIFKERATIFLKVTKERKNWIIKNLLFRKGKRKNISKQNIIPLFGVREIDELNETKKDSIMSNQMIYELSGQKKSMEWPNSSLNENKIKNLIDRIKIIKNQTEEISKEKENLTNRCNKPRYDSQIIASSKKRWQAFKRKNIRLIRKSFFFFKFCIEQLSITFFLGIINIPRITTQLQLFFESTKTILDKYIYKNEENGEKKKNQKNTIYFISTLKNLISKNKKFSYDLCSLSQAYVFYKLSQIQVSNFSKLKAVLEYNICITSFFVKNQIKDFCQEQGIFHYELKDKTFFNSEVNPWKYWLRSHSQYNLPWIAWARLVTQKWKKKINQDFLVLNTSLIKTDLYEKNKIDNYKKQQFFEANSLLNSKHNLKKDYIYNSFCYRSIHSREKKFDMSMSIGITPDNCLVSSFLEKYNIQVIGEIGHRKYLDWRILNFWFRKKVNIGLLIDTKSKKKYIKTKVQNYKKIDKITKTDLANQKSFFFDWMGMNEERLNHRITNFAFFFFSEFFLFSSTYKTKPWVIPIKLLLFNFNEKKNVNKKITLKKKGFIPSNEKGPLRFFNLNKEENELVGQGELESDNEKKRNPESALSNQEKNIEKNYAESKIKKRQNKKQYKSHTEAELYLFLTRYSRFQLRWNCFFNQKILNNIKVYCLLVRLKNPNEIAISSIERGELSLDILMIEKNFTFSKLMKKGILIIEPVRLSVKNDGQLIIYRTVGISLVHKNKQKISKRYKKKSYIDKKNNYDFFIPENILSPKRRREFRILICFNLKKKNARDRNSRFDKNIQNLTTVLHKKKDLYKDKKTLIKLKSFLWPNFRLEDLACMNRYWFNTTNGNHFSMIRIHMYARFQIR</sequence>
<keyword id="KW-0150">Chloroplast</keyword>
<keyword id="KW-0472">Membrane</keyword>
<keyword id="KW-0934">Plastid</keyword>
<keyword id="KW-1001">Plastid inner membrane</keyword>
<keyword id="KW-0653">Protein transport</keyword>
<keyword id="KW-0812">Transmembrane</keyword>
<keyword id="KW-1133">Transmembrane helix</keyword>
<keyword id="KW-0813">Transport</keyword>
<accession>A4QK78</accession>
<accession>A4QK66</accession>
<gene>
    <name evidence="1" type="primary">TIC214</name>
    <name type="synonym">ycf1-A</name>
</gene>
<gene>
    <name evidence="1" type="primary">TIC214</name>
    <name type="synonym">ycf1-B</name>
</gene>
<organism>
    <name type="scientific">Arabis hirsuta</name>
    <name type="common">Hairy rock-cress</name>
    <name type="synonym">Turritis hirsuta</name>
    <dbReference type="NCBI Taxonomy" id="78191"/>
    <lineage>
        <taxon>Eukaryota</taxon>
        <taxon>Viridiplantae</taxon>
        <taxon>Streptophyta</taxon>
        <taxon>Embryophyta</taxon>
        <taxon>Tracheophyta</taxon>
        <taxon>Spermatophyta</taxon>
        <taxon>Magnoliopsida</taxon>
        <taxon>eudicotyledons</taxon>
        <taxon>Gunneridae</taxon>
        <taxon>Pentapetalae</taxon>
        <taxon>rosids</taxon>
        <taxon>malvids</taxon>
        <taxon>Brassicales</taxon>
        <taxon>Brassicaceae</taxon>
        <taxon>Arabideae</taxon>
        <taxon>Arabis</taxon>
    </lineage>
</organism>
<protein>
    <recommendedName>
        <fullName evidence="1">Protein TIC 214</fullName>
    </recommendedName>
    <alternativeName>
        <fullName evidence="1">Translocon at the inner envelope membrane of chloroplasts 214</fullName>
        <shortName evidence="1">AtTIC214</shortName>
    </alternativeName>
</protein>
<geneLocation type="chloroplast"/>
<dbReference type="EMBL" id="AP009369">
    <property type="protein sequence ID" value="BAF50083.1"/>
    <property type="molecule type" value="Genomic_DNA"/>
</dbReference>
<dbReference type="EMBL" id="AP009369">
    <property type="protein sequence ID" value="BAF50071.1"/>
    <property type="molecule type" value="Genomic_DNA"/>
</dbReference>
<dbReference type="GO" id="GO:0009706">
    <property type="term" value="C:chloroplast inner membrane"/>
    <property type="evidence" value="ECO:0007669"/>
    <property type="project" value="UniProtKB-SubCell"/>
</dbReference>
<dbReference type="GO" id="GO:0015031">
    <property type="term" value="P:protein transport"/>
    <property type="evidence" value="ECO:0007669"/>
    <property type="project" value="UniProtKB-KW"/>
</dbReference>
<dbReference type="InterPro" id="IPR008896">
    <property type="entry name" value="TIC214"/>
</dbReference>
<dbReference type="PANTHER" id="PTHR33163:SF40">
    <property type="entry name" value="PROTEIN TIC 214"/>
    <property type="match status" value="1"/>
</dbReference>
<dbReference type="PANTHER" id="PTHR33163">
    <property type="entry name" value="PROTEIN TIC 214-RELATED"/>
    <property type="match status" value="1"/>
</dbReference>
<dbReference type="Pfam" id="PF05758">
    <property type="entry name" value="Ycf1"/>
    <property type="match status" value="1"/>
</dbReference>
<reference key="1">
    <citation type="submission" date="2007-03" db="EMBL/GenBank/DDBJ databases">
        <title>Sequencing analysis of Arabis hirsuta chloroplast DNA.</title>
        <authorList>
            <person name="Hosouchi T."/>
            <person name="Tsuruoka H."/>
            <person name="Kotani H."/>
        </authorList>
    </citation>
    <scope>NUCLEOTIDE SEQUENCE [LARGE SCALE GENOMIC DNA]</scope>
</reference>
<feature type="chain" id="PRO_0000326561" description="Protein TIC 214">
    <location>
        <begin position="1"/>
        <end position="1778"/>
    </location>
</feature>
<feature type="transmembrane region" description="Helical" evidence="2">
    <location>
        <begin position="18"/>
        <end position="38"/>
    </location>
</feature>
<feature type="transmembrane region" description="Helical" evidence="2">
    <location>
        <begin position="67"/>
        <end position="87"/>
    </location>
</feature>
<feature type="transmembrane region" description="Helical" evidence="2">
    <location>
        <begin position="90"/>
        <end position="110"/>
    </location>
</feature>
<feature type="transmembrane region" description="Helical" evidence="2">
    <location>
        <begin position="132"/>
        <end position="152"/>
    </location>
</feature>
<feature type="transmembrane region" description="Helical" evidence="2">
    <location>
        <begin position="175"/>
        <end position="195"/>
    </location>
</feature>
<feature type="transmembrane region" description="Helical" evidence="2">
    <location>
        <begin position="226"/>
        <end position="246"/>
    </location>
</feature>
<feature type="region of interest" description="Disordered" evidence="3">
    <location>
        <begin position="1498"/>
        <end position="1520"/>
    </location>
</feature>
<proteinExistence type="inferred from homology"/>
<name>TI214_ARAHI</name>
<comment type="function">
    <text evidence="1">Involved in protein precursor import into chloroplasts. May be part of an intermediate translocation complex acting as a protein-conducting channel at the inner envelope.</text>
</comment>
<comment type="subunit">
    <text evidence="1">Part of the Tic complex.</text>
</comment>
<comment type="subcellular location">
    <subcellularLocation>
        <location evidence="1">Plastid</location>
        <location evidence="1">Chloroplast inner membrane</location>
        <topology evidence="2">Multi-pass membrane protein</topology>
    </subcellularLocation>
</comment>
<comment type="miscellaneous">
    <text>There is a partial copy of the N-terminus (positions 1-341) of ycf1 in the inverted repeat (BAF50071).</text>
</comment>
<comment type="similarity">
    <text evidence="4">Belongs to the TIC214 family.</text>
</comment>
<evidence type="ECO:0000250" key="1">
    <source>
        <dbReference type="UniProtKB" id="P56785"/>
    </source>
</evidence>
<evidence type="ECO:0000255" key="2"/>
<evidence type="ECO:0000256" key="3">
    <source>
        <dbReference type="SAM" id="MobiDB-lite"/>
    </source>
</evidence>
<evidence type="ECO:0000305" key="4"/>